<gene>
    <name type="primary">BGLU26</name>
    <name type="ordered locus">Os07g0656200</name>
    <name type="ordered locus">LOC_Os07g46280</name>
    <name type="ORF">OsJ_25416</name>
</gene>
<proteinExistence type="evidence at protein level"/>
<name>BGL26_ORYSJ</name>
<sequence>MRKFIAALRLALAAAAHLLLTLPPAQCYWLNPEIYDAGGLSRRAFPEGFVFGTAASAYQVEGMAKQGGRGPSIWDAFIEKPGTIPNNATADVTVDEYHRYKEDVNIMKNMGFDAYRFSISWSRIFPNGTGMVNQEGVDYYNRLIDYMVKKGIKPYANLYHYDLPLALHEQYLGWLSPNIVEAFADYADFCFQTFGDRVKDWFTFNEPRCVAALGYDNGFHAPGRCSGCDAGGNSTTEPYLAAHHLILSHAAAVKRYREKYQLYQKGRIGILLDFVWYEPFSDSNADRAAAQRARDFHLGWFLDPIIHGRYPYSMLEIVKDRMPTFSDEESRMVKDSIDYVGINHYTSFYMKDPGPWNLTPTSYQDDWHVGFAYERNGVPIGAQANSYWLYIVPWGINKAVTYVKETYGNPTMILSENGMDQPGNVSITQGVHDTVRIRYYRNYITELKKAIDDGAKVIGYFAWSLLDNFEWRLGYTSRFGIVYVDYKTLKRYPKDSAFWFKNMLSSKKRN</sequence>
<feature type="signal peptide" evidence="4">
    <location>
        <begin position="1"/>
        <end position="27"/>
    </location>
</feature>
<feature type="chain" id="PRO_0000390343" description="Beta-glucosidase 26">
    <location>
        <begin position="28"/>
        <end position="510"/>
    </location>
</feature>
<feature type="active site" description="Proton donor" evidence="2">
    <location>
        <position position="206"/>
    </location>
</feature>
<feature type="active site" description="Nucleophile" evidence="2">
    <location>
        <position position="416"/>
    </location>
</feature>
<feature type="binding site" evidence="2">
    <location>
        <position position="59"/>
    </location>
    <ligand>
        <name>a beta-D-glucoside</name>
        <dbReference type="ChEBI" id="CHEBI:22798"/>
    </ligand>
</feature>
<feature type="binding site" evidence="2">
    <location>
        <position position="160"/>
    </location>
    <ligand>
        <name>a beta-D-glucoside</name>
        <dbReference type="ChEBI" id="CHEBI:22798"/>
    </ligand>
</feature>
<feature type="binding site" evidence="2">
    <location>
        <begin position="205"/>
        <end position="206"/>
    </location>
    <ligand>
        <name>a beta-D-glucoside</name>
        <dbReference type="ChEBI" id="CHEBI:22798"/>
    </ligand>
</feature>
<feature type="binding site" evidence="2">
    <location>
        <position position="345"/>
    </location>
    <ligand>
        <name>a beta-D-glucoside</name>
        <dbReference type="ChEBI" id="CHEBI:22798"/>
    </ligand>
</feature>
<feature type="binding site" evidence="3">
    <location>
        <position position="416"/>
    </location>
    <ligand>
        <name>a beta-D-glucoside</name>
        <dbReference type="ChEBI" id="CHEBI:22798"/>
    </ligand>
</feature>
<feature type="binding site" evidence="2">
    <location>
        <position position="463"/>
    </location>
    <ligand>
        <name>a beta-D-glucoside</name>
        <dbReference type="ChEBI" id="CHEBI:22798"/>
    </ligand>
</feature>
<feature type="binding site" evidence="2">
    <location>
        <begin position="470"/>
        <end position="471"/>
    </location>
    <ligand>
        <name>a beta-D-glucoside</name>
        <dbReference type="ChEBI" id="CHEBI:22798"/>
    </ligand>
</feature>
<feature type="binding site" evidence="1">
    <location>
        <position position="479"/>
    </location>
    <ligand>
        <name>a beta-D-glucoside</name>
        <dbReference type="ChEBI" id="CHEBI:22798"/>
    </ligand>
</feature>
<feature type="glycosylation site" description="N-linked (GlcNAc...) asparagine" evidence="5">
    <location>
        <position position="87"/>
    </location>
</feature>
<feature type="glycosylation site" description="N-linked (GlcNAc...) asparagine" evidence="5">
    <location>
        <position position="127"/>
    </location>
</feature>
<feature type="glycosylation site" description="N-linked (GlcNAc...) asparagine" evidence="5">
    <location>
        <position position="233"/>
    </location>
</feature>
<feature type="glycosylation site" description="N-linked (GlcNAc...) asparagine" evidence="5">
    <location>
        <position position="424"/>
    </location>
</feature>
<feature type="disulfide bond" evidence="2">
    <location>
        <begin position="225"/>
        <end position="228"/>
    </location>
</feature>
<protein>
    <recommendedName>
        <fullName>Beta-glucosidase 26</fullName>
        <shortName>Os7bglu26</shortName>
        <ecNumber evidence="6">3.2.1.21</ecNumber>
    </recommendedName>
</protein>
<dbReference type="EC" id="3.2.1.21" evidence="6"/>
<dbReference type="EMBL" id="AP008213">
    <property type="protein sequence ID" value="BAF22416.1"/>
    <property type="status" value="ALT_SEQ"/>
    <property type="molecule type" value="Genomic_DNA"/>
</dbReference>
<dbReference type="EMBL" id="AP014963">
    <property type="status" value="NOT_ANNOTATED_CDS"/>
    <property type="molecule type" value="Genomic_DNA"/>
</dbReference>
<dbReference type="EMBL" id="CM000144">
    <property type="protein sequence ID" value="EAZ40934.1"/>
    <property type="molecule type" value="Genomic_DNA"/>
</dbReference>
<dbReference type="RefSeq" id="XP_015647146.1">
    <property type="nucleotide sequence ID" value="XM_015791660.1"/>
</dbReference>
<dbReference type="RefSeq" id="XP_015647147.1">
    <property type="nucleotide sequence ID" value="XM_015791661.1"/>
</dbReference>
<dbReference type="SMR" id="A3BMZ5"/>
<dbReference type="FunCoup" id="A3BMZ5">
    <property type="interactions" value="504"/>
</dbReference>
<dbReference type="STRING" id="39947.A3BMZ5"/>
<dbReference type="GlyCosmos" id="A3BMZ5">
    <property type="glycosylation" value="4 sites, No reported glycans"/>
</dbReference>
<dbReference type="PaxDb" id="39947-A3BMZ5"/>
<dbReference type="KEGG" id="dosa:Os07g0656200"/>
<dbReference type="InParanoid" id="A3BMZ5"/>
<dbReference type="SABIO-RK" id="A3BMZ5"/>
<dbReference type="Proteomes" id="UP000000763">
    <property type="component" value="Chromosome 7"/>
</dbReference>
<dbReference type="Proteomes" id="UP000007752">
    <property type="component" value="Chromosome 7"/>
</dbReference>
<dbReference type="Proteomes" id="UP000059680">
    <property type="component" value="Chromosome 7"/>
</dbReference>
<dbReference type="GO" id="GO:0033907">
    <property type="term" value="F:beta-D-fucosidase activity"/>
    <property type="evidence" value="ECO:0000314"/>
    <property type="project" value="UniProtKB"/>
</dbReference>
<dbReference type="GO" id="GO:0004565">
    <property type="term" value="F:beta-galactosidase activity"/>
    <property type="evidence" value="ECO:0000314"/>
    <property type="project" value="UniProtKB"/>
</dbReference>
<dbReference type="GO" id="GO:0008422">
    <property type="term" value="F:beta-glucosidase activity"/>
    <property type="evidence" value="ECO:0000314"/>
    <property type="project" value="UniProtKB"/>
</dbReference>
<dbReference type="GO" id="GO:0047701">
    <property type="term" value="F:beta-L-arabinosidase activity"/>
    <property type="evidence" value="ECO:0000314"/>
    <property type="project" value="UniProtKB"/>
</dbReference>
<dbReference type="GO" id="GO:0004567">
    <property type="term" value="F:beta-mannosidase activity"/>
    <property type="evidence" value="ECO:0000314"/>
    <property type="project" value="UniProtKB"/>
</dbReference>
<dbReference type="GO" id="GO:0080079">
    <property type="term" value="F:cellobiose glucosidase activity"/>
    <property type="evidence" value="ECO:0000314"/>
    <property type="project" value="UniProtKB"/>
</dbReference>
<dbReference type="GO" id="GO:0004338">
    <property type="term" value="F:glucan exo-1,3-beta-glucosidase activity"/>
    <property type="evidence" value="ECO:0000314"/>
    <property type="project" value="UniProtKB"/>
</dbReference>
<dbReference type="GO" id="GO:0005975">
    <property type="term" value="P:carbohydrate metabolic process"/>
    <property type="evidence" value="ECO:0007669"/>
    <property type="project" value="InterPro"/>
</dbReference>
<dbReference type="FunFam" id="3.20.20.80:FF:000041">
    <property type="entry name" value="Beta-glucosidase 7"/>
    <property type="match status" value="1"/>
</dbReference>
<dbReference type="Gene3D" id="3.20.20.80">
    <property type="entry name" value="Glycosidases"/>
    <property type="match status" value="1"/>
</dbReference>
<dbReference type="InterPro" id="IPR001360">
    <property type="entry name" value="Glyco_hydro_1"/>
</dbReference>
<dbReference type="InterPro" id="IPR017853">
    <property type="entry name" value="Glycoside_hydrolase_SF"/>
</dbReference>
<dbReference type="PANTHER" id="PTHR10353:SF28">
    <property type="entry name" value="BETA-GLUCOSIDASE 44"/>
    <property type="match status" value="1"/>
</dbReference>
<dbReference type="PANTHER" id="PTHR10353">
    <property type="entry name" value="GLYCOSYL HYDROLASE"/>
    <property type="match status" value="1"/>
</dbReference>
<dbReference type="Pfam" id="PF00232">
    <property type="entry name" value="Glyco_hydro_1"/>
    <property type="match status" value="1"/>
</dbReference>
<dbReference type="PRINTS" id="PR00131">
    <property type="entry name" value="GLHYDRLASE1"/>
</dbReference>
<dbReference type="SUPFAM" id="SSF51445">
    <property type="entry name" value="(Trans)glycosidases"/>
    <property type="match status" value="1"/>
</dbReference>
<organism>
    <name type="scientific">Oryza sativa subsp. japonica</name>
    <name type="common">Rice</name>
    <dbReference type="NCBI Taxonomy" id="39947"/>
    <lineage>
        <taxon>Eukaryota</taxon>
        <taxon>Viridiplantae</taxon>
        <taxon>Streptophyta</taxon>
        <taxon>Embryophyta</taxon>
        <taxon>Tracheophyta</taxon>
        <taxon>Spermatophyta</taxon>
        <taxon>Magnoliopsida</taxon>
        <taxon>Liliopsida</taxon>
        <taxon>Poales</taxon>
        <taxon>Poaceae</taxon>
        <taxon>BOP clade</taxon>
        <taxon>Oryzoideae</taxon>
        <taxon>Oryzeae</taxon>
        <taxon>Oryzinae</taxon>
        <taxon>Oryza</taxon>
        <taxon>Oryza sativa</taxon>
    </lineage>
</organism>
<keyword id="KW-1015">Disulfide bond</keyword>
<keyword id="KW-0325">Glycoprotein</keyword>
<keyword id="KW-0326">Glycosidase</keyword>
<keyword id="KW-0378">Hydrolase</keyword>
<keyword id="KW-1185">Reference proteome</keyword>
<keyword id="KW-0732">Signal</keyword>
<comment type="function">
    <text evidence="6">Hydrolyzes p-nitrophenyl beta-D-glucoside, p-nitrophenyl beta-D-mannoside, p-nitrophenyl beta-D-galactoside, p-nitrophenyl beta-D-xyloside, p-nitrophenyl beta-D-fucoside, p-nitrophenyl beta-L-arabinoside, cello-oligosaccharides, laminari-oligosaccharides and sophorose.</text>
</comment>
<comment type="catalytic activity">
    <reaction evidence="6">
        <text>Hydrolysis of terminal, non-reducing beta-D-glucosyl residues with release of beta-D-glucose.</text>
        <dbReference type="EC" id="3.2.1.21"/>
    </reaction>
</comment>
<comment type="biophysicochemical properties">
    <kinetics>
        <KM evidence="6">0.27 mM for p-nitrophenyl beta-D-glucoside (at pH 5.0)</KM>
        <KM evidence="6">0.52 mM for p-nitrophenyl beta-D-mannoside (at pH 5.0)</KM>
        <KM evidence="6">19.6 mM for cellobiose (at pH 5.0)</KM>
        <KM evidence="6">0.52 mM for cellotriose (at pH 5.0)</KM>
        <KM evidence="6">0.09 mM for cellotetraose (at pH 5.0)</KM>
        <KM evidence="6">0.06 mM for cellopentaose (at pH 5.0)</KM>
        <KM evidence="6">0.05 mM for cellohexaose (at pH 5.0)</KM>
        <KM evidence="6">0.86 mM for laminaribiose (at pH 5.0)</KM>
        <KM evidence="6">8.7 mM for laminaritriose (at pH 5.0)</KM>
    </kinetics>
</comment>
<comment type="similarity">
    <text evidence="7">Belongs to the glycosyl hydrolase 1 family.</text>
</comment>
<comment type="sequence caution" evidence="7">
    <conflict type="erroneous gene model prediction">
        <sequence resource="EMBL-CDS" id="BAF22416"/>
    </conflict>
</comment>
<accession>A3BMZ5</accession>
<accession>Q0D407</accession>
<evidence type="ECO:0000250" key="1">
    <source>
        <dbReference type="UniProtKB" id="Q1XH05"/>
    </source>
</evidence>
<evidence type="ECO:0000250" key="2">
    <source>
        <dbReference type="UniProtKB" id="Q7XSK0"/>
    </source>
</evidence>
<evidence type="ECO:0000250" key="3">
    <source>
        <dbReference type="UniProtKB" id="Q9SPP9"/>
    </source>
</evidence>
<evidence type="ECO:0000255" key="4"/>
<evidence type="ECO:0000255" key="5">
    <source>
        <dbReference type="PROSITE-ProRule" id="PRU00498"/>
    </source>
</evidence>
<evidence type="ECO:0000269" key="6">
    <source>
    </source>
</evidence>
<evidence type="ECO:0000305" key="7"/>
<reference key="1">
    <citation type="journal article" date="2005" name="Nature">
        <title>The map-based sequence of the rice genome.</title>
        <authorList>
            <consortium name="International rice genome sequencing project (IRGSP)"/>
        </authorList>
    </citation>
    <scope>NUCLEOTIDE SEQUENCE [LARGE SCALE GENOMIC DNA]</scope>
    <source>
        <strain>cv. Nipponbare</strain>
    </source>
</reference>
<reference key="2">
    <citation type="journal article" date="2008" name="Nucleic Acids Res.">
        <title>The rice annotation project database (RAP-DB): 2008 update.</title>
        <authorList>
            <consortium name="The rice annotation project (RAP)"/>
        </authorList>
    </citation>
    <scope>GENOME REANNOTATION</scope>
    <source>
        <strain>cv. Nipponbare</strain>
    </source>
</reference>
<reference key="3">
    <citation type="journal article" date="2013" name="Rice">
        <title>Improvement of the Oryza sativa Nipponbare reference genome using next generation sequence and optical map data.</title>
        <authorList>
            <person name="Kawahara Y."/>
            <person name="de la Bastide M."/>
            <person name="Hamilton J.P."/>
            <person name="Kanamori H."/>
            <person name="McCombie W.R."/>
            <person name="Ouyang S."/>
            <person name="Schwartz D.C."/>
            <person name="Tanaka T."/>
            <person name="Wu J."/>
            <person name="Zhou S."/>
            <person name="Childs K.L."/>
            <person name="Davidson R.M."/>
            <person name="Lin H."/>
            <person name="Quesada-Ocampo L."/>
            <person name="Vaillancourt B."/>
            <person name="Sakai H."/>
            <person name="Lee S.S."/>
            <person name="Kim J."/>
            <person name="Numa H."/>
            <person name="Itoh T."/>
            <person name="Buell C.R."/>
            <person name="Matsumoto T."/>
        </authorList>
    </citation>
    <scope>GENOME REANNOTATION</scope>
    <source>
        <strain>cv. Nipponbare</strain>
    </source>
</reference>
<reference key="4">
    <citation type="journal article" date="2005" name="PLoS Biol.">
        <title>The genomes of Oryza sativa: a history of duplications.</title>
        <authorList>
            <person name="Yu J."/>
            <person name="Wang J."/>
            <person name="Lin W."/>
            <person name="Li S."/>
            <person name="Li H."/>
            <person name="Zhou J."/>
            <person name="Ni P."/>
            <person name="Dong W."/>
            <person name="Hu S."/>
            <person name="Zeng C."/>
            <person name="Zhang J."/>
            <person name="Zhang Y."/>
            <person name="Li R."/>
            <person name="Xu Z."/>
            <person name="Li S."/>
            <person name="Li X."/>
            <person name="Zheng H."/>
            <person name="Cong L."/>
            <person name="Lin L."/>
            <person name="Yin J."/>
            <person name="Geng J."/>
            <person name="Li G."/>
            <person name="Shi J."/>
            <person name="Liu J."/>
            <person name="Lv H."/>
            <person name="Li J."/>
            <person name="Wang J."/>
            <person name="Deng Y."/>
            <person name="Ran L."/>
            <person name="Shi X."/>
            <person name="Wang X."/>
            <person name="Wu Q."/>
            <person name="Li C."/>
            <person name="Ren X."/>
            <person name="Wang J."/>
            <person name="Wang X."/>
            <person name="Li D."/>
            <person name="Liu D."/>
            <person name="Zhang X."/>
            <person name="Ji Z."/>
            <person name="Zhao W."/>
            <person name="Sun Y."/>
            <person name="Zhang Z."/>
            <person name="Bao J."/>
            <person name="Han Y."/>
            <person name="Dong L."/>
            <person name="Ji J."/>
            <person name="Chen P."/>
            <person name="Wu S."/>
            <person name="Liu J."/>
            <person name="Xiao Y."/>
            <person name="Bu D."/>
            <person name="Tan J."/>
            <person name="Yang L."/>
            <person name="Ye C."/>
            <person name="Zhang J."/>
            <person name="Xu J."/>
            <person name="Zhou Y."/>
            <person name="Yu Y."/>
            <person name="Zhang B."/>
            <person name="Zhuang S."/>
            <person name="Wei H."/>
            <person name="Liu B."/>
            <person name="Lei M."/>
            <person name="Yu H."/>
            <person name="Li Y."/>
            <person name="Xu H."/>
            <person name="Wei S."/>
            <person name="He X."/>
            <person name="Fang L."/>
            <person name="Zhang Z."/>
            <person name="Zhang Y."/>
            <person name="Huang X."/>
            <person name="Su Z."/>
            <person name="Tong W."/>
            <person name="Li J."/>
            <person name="Tong Z."/>
            <person name="Li S."/>
            <person name="Ye J."/>
            <person name="Wang L."/>
            <person name="Fang L."/>
            <person name="Lei T."/>
            <person name="Chen C.-S."/>
            <person name="Chen H.-C."/>
            <person name="Xu Z."/>
            <person name="Li H."/>
            <person name="Huang H."/>
            <person name="Zhang F."/>
            <person name="Xu H."/>
            <person name="Li N."/>
            <person name="Zhao C."/>
            <person name="Li S."/>
            <person name="Dong L."/>
            <person name="Huang Y."/>
            <person name="Li L."/>
            <person name="Xi Y."/>
            <person name="Qi Q."/>
            <person name="Li W."/>
            <person name="Zhang B."/>
            <person name="Hu W."/>
            <person name="Zhang Y."/>
            <person name="Tian X."/>
            <person name="Jiao Y."/>
            <person name="Liang X."/>
            <person name="Jin J."/>
            <person name="Gao L."/>
            <person name="Zheng W."/>
            <person name="Hao B."/>
            <person name="Liu S.-M."/>
            <person name="Wang W."/>
            <person name="Yuan L."/>
            <person name="Cao M."/>
            <person name="McDermott J."/>
            <person name="Samudrala R."/>
            <person name="Wang J."/>
            <person name="Wong G.K.-S."/>
            <person name="Yang H."/>
        </authorList>
    </citation>
    <scope>NUCLEOTIDE SEQUENCE [LARGE SCALE GENOMIC DNA]</scope>
    <source>
        <strain>cv. Nipponbare</strain>
    </source>
</reference>
<reference key="5">
    <citation type="journal article" date="2006" name="BMC Plant Biol.">
        <title>Analysis of rice glycosyl hydrolase family 1 and expression of Os4bglu12 beta-glucosidase.</title>
        <authorList>
            <person name="Opassiri R."/>
            <person name="Pomthong B."/>
            <person name="Onkoksoong T."/>
            <person name="Akiyama T."/>
            <person name="Esen A."/>
            <person name="Ketudat Cairns J.R."/>
        </authorList>
    </citation>
    <scope>GENE FAMILY</scope>
    <scope>NOMENCLATURE</scope>
</reference>
<reference key="6">
    <citation type="journal article" date="2009" name="Arch. Biochem. Biophys.">
        <title>Rice family GH1 glycoside hydrolases with beta-D-glucosidase and beta-D-mannosidase activities.</title>
        <authorList>
            <person name="Kuntothom T."/>
            <person name="Luang S."/>
            <person name="Harvey A.J."/>
            <person name="Fincher G.B."/>
            <person name="Opassiri R."/>
            <person name="Hrmova M."/>
            <person name="Ketudat Cairns J.R."/>
        </authorList>
    </citation>
    <scope>FUNCTION</scope>
    <scope>BIOPHYSICOCHEMICAL PROPERTIES</scope>
    <scope>CATALYTIC ACTIVITY</scope>
</reference>